<evidence type="ECO:0000250" key="1"/>
<evidence type="ECO:0000250" key="2">
    <source>
        <dbReference type="UniProtKB" id="Q99PL5"/>
    </source>
</evidence>
<evidence type="ECO:0000255" key="3"/>
<evidence type="ECO:0000256" key="4">
    <source>
        <dbReference type="SAM" id="MobiDB-lite"/>
    </source>
</evidence>
<evidence type="ECO:0000269" key="5">
    <source>
    </source>
</evidence>
<evidence type="ECO:0000303" key="6">
    <source>
    </source>
</evidence>
<evidence type="ECO:0000305" key="7"/>
<evidence type="ECO:0007744" key="8">
    <source>
    </source>
</evidence>
<evidence type="ECO:0007744" key="9">
    <source>
    </source>
</evidence>
<evidence type="ECO:0007744" key="10">
    <source>
    </source>
</evidence>
<evidence type="ECO:0007744" key="11">
    <source>
    </source>
</evidence>
<evidence type="ECO:0007744" key="12">
    <source>
    </source>
</evidence>
<evidence type="ECO:0007744" key="13">
    <source>
    </source>
</evidence>
<evidence type="ECO:0007744" key="14">
    <source>
    </source>
</evidence>
<evidence type="ECO:0007744" key="15">
    <source>
    </source>
</evidence>
<evidence type="ECO:0007744" key="16">
    <source>
    </source>
</evidence>
<evidence type="ECO:0007744" key="17">
    <source>
    </source>
</evidence>
<evidence type="ECO:0007744" key="18">
    <source>
    </source>
</evidence>
<reference key="1">
    <citation type="journal article" date="1998" name="DNA Cell Biol.">
        <title>Identification of multiple forms of 180-kDa ribosome receptor in human cells.</title>
        <authorList>
            <person name="Langley R."/>
            <person name="Leung E."/>
            <person name="Morris C."/>
            <person name="Berg R."/>
            <person name="McDonald M."/>
            <person name="Weaver A."/>
            <person name="Parry D."/>
            <person name="Ni J."/>
            <person name="Su J."/>
            <person name="Gentz R."/>
            <person name="Spurr N."/>
            <person name="Krissansen G.W."/>
        </authorList>
    </citation>
    <scope>NUCLEOTIDE SEQUENCE [MRNA] (ISOFORM 2)</scope>
</reference>
<reference key="2">
    <citation type="journal article" date="2000" name="DNA Res.">
        <title>Prediction of the coding sequences of unidentified human genes. XVI. The complete sequences of 150 new cDNA clones from brain which code for large proteins in vitro.</title>
        <authorList>
            <person name="Nagase T."/>
            <person name="Kikuno R."/>
            <person name="Ishikawa K."/>
            <person name="Hirosawa M."/>
            <person name="Ohara O."/>
        </authorList>
    </citation>
    <scope>NUCLEOTIDE SEQUENCE [LARGE SCALE MRNA] (ISOFORM 1)</scope>
    <source>
        <tissue>Brain</tissue>
    </source>
</reference>
<reference key="3">
    <citation type="journal article" date="2002" name="DNA Res.">
        <title>Construction of expression-ready cDNA clones for KIAA genes: manual curation of 330 KIAA cDNA clones.</title>
        <authorList>
            <person name="Nakajima D."/>
            <person name="Okazaki N."/>
            <person name="Yamakawa H."/>
            <person name="Kikuno R."/>
            <person name="Ohara O."/>
            <person name="Nagase T."/>
        </authorList>
    </citation>
    <scope>SEQUENCE REVISION</scope>
</reference>
<reference key="4">
    <citation type="journal article" date="2001" name="Nature">
        <title>The DNA sequence and comparative analysis of human chromosome 20.</title>
        <authorList>
            <person name="Deloukas P."/>
            <person name="Matthews L.H."/>
            <person name="Ashurst J.L."/>
            <person name="Burton J."/>
            <person name="Gilbert J.G.R."/>
            <person name="Jones M."/>
            <person name="Stavrides G."/>
            <person name="Almeida J.P."/>
            <person name="Babbage A.K."/>
            <person name="Bagguley C.L."/>
            <person name="Bailey J."/>
            <person name="Barlow K.F."/>
            <person name="Bates K.N."/>
            <person name="Beard L.M."/>
            <person name="Beare D.M."/>
            <person name="Beasley O.P."/>
            <person name="Bird C.P."/>
            <person name="Blakey S.E."/>
            <person name="Bridgeman A.M."/>
            <person name="Brown A.J."/>
            <person name="Buck D."/>
            <person name="Burrill W.D."/>
            <person name="Butler A.P."/>
            <person name="Carder C."/>
            <person name="Carter N.P."/>
            <person name="Chapman J.C."/>
            <person name="Clamp M."/>
            <person name="Clark G."/>
            <person name="Clark L.N."/>
            <person name="Clark S.Y."/>
            <person name="Clee C.M."/>
            <person name="Clegg S."/>
            <person name="Cobley V.E."/>
            <person name="Collier R.E."/>
            <person name="Connor R.E."/>
            <person name="Corby N.R."/>
            <person name="Coulson A."/>
            <person name="Coville G.J."/>
            <person name="Deadman R."/>
            <person name="Dhami P.D."/>
            <person name="Dunn M."/>
            <person name="Ellington A.G."/>
            <person name="Frankland J.A."/>
            <person name="Fraser A."/>
            <person name="French L."/>
            <person name="Garner P."/>
            <person name="Grafham D.V."/>
            <person name="Griffiths C."/>
            <person name="Griffiths M.N.D."/>
            <person name="Gwilliam R."/>
            <person name="Hall R.E."/>
            <person name="Hammond S."/>
            <person name="Harley J.L."/>
            <person name="Heath P.D."/>
            <person name="Ho S."/>
            <person name="Holden J.L."/>
            <person name="Howden P.J."/>
            <person name="Huckle E."/>
            <person name="Hunt A.R."/>
            <person name="Hunt S.E."/>
            <person name="Jekosch K."/>
            <person name="Johnson C.M."/>
            <person name="Johnson D."/>
            <person name="Kay M.P."/>
            <person name="Kimberley A.M."/>
            <person name="King A."/>
            <person name="Knights A."/>
            <person name="Laird G.K."/>
            <person name="Lawlor S."/>
            <person name="Lehvaeslaiho M.H."/>
            <person name="Leversha M.A."/>
            <person name="Lloyd C."/>
            <person name="Lloyd D.M."/>
            <person name="Lovell J.D."/>
            <person name="Marsh V.L."/>
            <person name="Martin S.L."/>
            <person name="McConnachie L.J."/>
            <person name="McLay K."/>
            <person name="McMurray A.A."/>
            <person name="Milne S.A."/>
            <person name="Mistry D."/>
            <person name="Moore M.J.F."/>
            <person name="Mullikin J.C."/>
            <person name="Nickerson T."/>
            <person name="Oliver K."/>
            <person name="Parker A."/>
            <person name="Patel R."/>
            <person name="Pearce T.A.V."/>
            <person name="Peck A.I."/>
            <person name="Phillimore B.J.C.T."/>
            <person name="Prathalingam S.R."/>
            <person name="Plumb R.W."/>
            <person name="Ramsay H."/>
            <person name="Rice C.M."/>
            <person name="Ross M.T."/>
            <person name="Scott C.E."/>
            <person name="Sehra H.K."/>
            <person name="Shownkeen R."/>
            <person name="Sims S."/>
            <person name="Skuce C.D."/>
            <person name="Smith M.L."/>
            <person name="Soderlund C."/>
            <person name="Steward C.A."/>
            <person name="Sulston J.E."/>
            <person name="Swann R.M."/>
            <person name="Sycamore N."/>
            <person name="Taylor R."/>
            <person name="Tee L."/>
            <person name="Thomas D.W."/>
            <person name="Thorpe A."/>
            <person name="Tracey A."/>
            <person name="Tromans A.C."/>
            <person name="Vaudin M."/>
            <person name="Wall M."/>
            <person name="Wallis J.M."/>
            <person name="Whitehead S.L."/>
            <person name="Whittaker P."/>
            <person name="Willey D.L."/>
            <person name="Williams L."/>
            <person name="Williams S.A."/>
            <person name="Wilming L."/>
            <person name="Wray P.W."/>
            <person name="Hubbard T."/>
            <person name="Durbin R.M."/>
            <person name="Bentley D.R."/>
            <person name="Beck S."/>
            <person name="Rogers J."/>
        </authorList>
    </citation>
    <scope>NUCLEOTIDE SEQUENCE [LARGE SCALE GENOMIC DNA]</scope>
</reference>
<reference key="5">
    <citation type="journal article" date="2007" name="BMC Genomics">
        <title>The full-ORF clone resource of the German cDNA consortium.</title>
        <authorList>
            <person name="Bechtel S."/>
            <person name="Rosenfelder H."/>
            <person name="Duda A."/>
            <person name="Schmidt C.P."/>
            <person name="Ernst U."/>
            <person name="Wellenreuther R."/>
            <person name="Mehrle A."/>
            <person name="Schuster C."/>
            <person name="Bahr A."/>
            <person name="Bloecker H."/>
            <person name="Heubner D."/>
            <person name="Hoerlein A."/>
            <person name="Michel G."/>
            <person name="Wedler H."/>
            <person name="Koehrer K."/>
            <person name="Ottenwaelder B."/>
            <person name="Poustka A."/>
            <person name="Wiemann S."/>
            <person name="Schupp I."/>
        </authorList>
    </citation>
    <scope>NUCLEOTIDE SEQUENCE [LARGE SCALE MRNA] OF 413-1211 (ISOFORM 1)</scope>
    <source>
        <tissue>Uterus</tissue>
    </source>
</reference>
<reference key="6">
    <citation type="journal article" date="2004" name="Genome Res.">
        <title>The status, quality, and expansion of the NIH full-length cDNA project: the Mammalian Gene Collection (MGC).</title>
        <authorList>
            <consortium name="The MGC Project Team"/>
        </authorList>
    </citation>
    <scope>NUCLEOTIDE SEQUENCE [LARGE SCALE MRNA] OF 756-1410</scope>
    <source>
        <tissue>Brain</tissue>
    </source>
</reference>
<reference key="7">
    <citation type="journal article" date="2006" name="Cell">
        <title>Global, in vivo, and site-specific phosphorylation dynamics in signaling networks.</title>
        <authorList>
            <person name="Olsen J.V."/>
            <person name="Blagoev B."/>
            <person name="Gnad F."/>
            <person name="Macek B."/>
            <person name="Kumar C."/>
            <person name="Mortensen P."/>
            <person name="Mann M."/>
        </authorList>
    </citation>
    <scope>PHOSPHORYLATION [LARGE SCALE ANALYSIS] AT THR-225; THR-245; THR-255; SER-583 AND SER-615</scope>
    <scope>IDENTIFICATION BY MASS SPECTROMETRY [LARGE SCALE ANALYSIS]</scope>
    <source>
        <tissue>Cervix carcinoma</tissue>
    </source>
</reference>
<reference key="8">
    <citation type="journal article" date="2006" name="Nat. Biotechnol.">
        <title>A probability-based approach for high-throughput protein phosphorylation analysis and site localization.</title>
        <authorList>
            <person name="Beausoleil S.A."/>
            <person name="Villen J."/>
            <person name="Gerber S.A."/>
            <person name="Rush J."/>
            <person name="Gygi S.P."/>
        </authorList>
    </citation>
    <scope>PHOSPHORYLATION [LARGE SCALE ANALYSIS] AT SER-615</scope>
    <scope>IDENTIFICATION BY MASS SPECTROMETRY [LARGE SCALE ANALYSIS]</scope>
    <source>
        <tissue>Cervix carcinoma</tissue>
    </source>
</reference>
<reference key="9">
    <citation type="journal article" date="2007" name="J. Proteome Res.">
        <title>Improved titanium dioxide enrichment of phosphopeptides from HeLa cells and high confident phosphopeptide identification by cross-validation of MS/MS and MS/MS/MS spectra.</title>
        <authorList>
            <person name="Yu L.R."/>
            <person name="Zhu Z."/>
            <person name="Chan K.C."/>
            <person name="Issaq H.J."/>
            <person name="Dimitrov D.S."/>
            <person name="Veenstra T.D."/>
        </authorList>
    </citation>
    <scope>PHOSPHORYLATION [LARGE SCALE ANALYSIS] AT SER-615</scope>
    <scope>IDENTIFICATION BY MASS SPECTROMETRY [LARGE SCALE ANALYSIS]</scope>
    <source>
        <tissue>Cervix carcinoma</tissue>
    </source>
</reference>
<reference key="10">
    <citation type="journal article" date="2008" name="Mol. Cell">
        <title>Kinase-selective enrichment enables quantitative phosphoproteomics of the kinome across the cell cycle.</title>
        <authorList>
            <person name="Daub H."/>
            <person name="Olsen J.V."/>
            <person name="Bairlein M."/>
            <person name="Gnad F."/>
            <person name="Oppermann F.S."/>
            <person name="Korner R."/>
            <person name="Greff Z."/>
            <person name="Keri G."/>
            <person name="Stemmann O."/>
            <person name="Mann M."/>
        </authorList>
    </citation>
    <scope>PHOSPHORYLATION [LARGE SCALE ANALYSIS] AT SER-615</scope>
    <scope>IDENTIFICATION BY MASS SPECTROMETRY [LARGE SCALE ANALYSIS]</scope>
    <source>
        <tissue>Cervix carcinoma</tissue>
    </source>
</reference>
<reference key="11">
    <citation type="journal article" date="2008" name="Proc. Natl. Acad. Sci. U.S.A.">
        <title>A quantitative atlas of mitotic phosphorylation.</title>
        <authorList>
            <person name="Dephoure N."/>
            <person name="Zhou C."/>
            <person name="Villen J."/>
            <person name="Beausoleil S.A."/>
            <person name="Bakalarski C.E."/>
            <person name="Elledge S.J."/>
            <person name="Gygi S.P."/>
        </authorList>
    </citation>
    <scope>PHOSPHORYLATION [LARGE SCALE ANALYSIS] AT SER-615; SER-1276 AND SER-1277</scope>
    <scope>IDENTIFICATION BY MASS SPECTROMETRY [LARGE SCALE ANALYSIS]</scope>
    <source>
        <tissue>Cervix carcinoma</tissue>
    </source>
</reference>
<reference key="12">
    <citation type="journal article" date="2010" name="Sci. Signal.">
        <title>Quantitative phosphoproteomics reveals widespread full phosphorylation site occupancy during mitosis.</title>
        <authorList>
            <person name="Olsen J.V."/>
            <person name="Vermeulen M."/>
            <person name="Santamaria A."/>
            <person name="Kumar C."/>
            <person name="Miller M.L."/>
            <person name="Jensen L.J."/>
            <person name="Gnad F."/>
            <person name="Cox J."/>
            <person name="Jensen T.S."/>
            <person name="Nigg E.A."/>
            <person name="Brunak S."/>
            <person name="Mann M."/>
        </authorList>
    </citation>
    <scope>PHOSPHORYLATION [LARGE SCALE ANALYSIS] AT THR-225; THR-235; THR-245; THR-255; SER-533 AND SER-615</scope>
    <scope>IDENTIFICATION BY MASS SPECTROMETRY [LARGE SCALE ANALYSIS]</scope>
    <source>
        <tissue>Cervix carcinoma</tissue>
    </source>
</reference>
<reference key="13">
    <citation type="journal article" date="2011" name="BMC Syst. Biol.">
        <title>Initial characterization of the human central proteome.</title>
        <authorList>
            <person name="Burkard T.R."/>
            <person name="Planyavsky M."/>
            <person name="Kaupe I."/>
            <person name="Breitwieser F.P."/>
            <person name="Buerckstuemmer T."/>
            <person name="Bennett K.L."/>
            <person name="Superti-Furga G."/>
            <person name="Colinge J."/>
        </authorList>
    </citation>
    <scope>IDENTIFICATION BY MASS SPECTROMETRY [LARGE SCALE ANALYSIS]</scope>
</reference>
<reference key="14">
    <citation type="journal article" date="2011" name="Sci. Signal.">
        <title>System-wide temporal characterization of the proteome and phosphoproteome of human embryonic stem cell differentiation.</title>
        <authorList>
            <person name="Rigbolt K.T."/>
            <person name="Prokhorova T.A."/>
            <person name="Akimov V."/>
            <person name="Henningsen J."/>
            <person name="Johansen P.T."/>
            <person name="Kratchmarova I."/>
            <person name="Kassem M."/>
            <person name="Mann M."/>
            <person name="Olsen J.V."/>
            <person name="Blagoev B."/>
        </authorList>
    </citation>
    <scope>PHOSPHORYLATION [LARGE SCALE ANALYSIS] AT SER-583; SER-615 AND SER-978</scope>
    <scope>IDENTIFICATION BY MASS SPECTROMETRY [LARGE SCALE ANALYSIS]</scope>
</reference>
<reference key="15">
    <citation type="journal article" date="2013" name="J. Proteome Res.">
        <title>Toward a comprehensive characterization of a human cancer cell phosphoproteome.</title>
        <authorList>
            <person name="Zhou H."/>
            <person name="Di Palma S."/>
            <person name="Preisinger C."/>
            <person name="Peng M."/>
            <person name="Polat A.N."/>
            <person name="Heck A.J."/>
            <person name="Mohammed S."/>
        </authorList>
    </citation>
    <scope>PHOSPHORYLATION [LARGE SCALE ANALYSIS] AT SER-615 AND SER-959</scope>
    <scope>IDENTIFICATION BY MASS SPECTROMETRY [LARGE SCALE ANALYSIS]</scope>
    <source>
        <tissue>Cervix carcinoma</tissue>
        <tissue>Erythroleukemia</tissue>
    </source>
</reference>
<reference key="16">
    <citation type="journal article" date="2014" name="J. Proteomics">
        <title>An enzyme assisted RP-RPLC approach for in-depth analysis of human liver phosphoproteome.</title>
        <authorList>
            <person name="Bian Y."/>
            <person name="Song C."/>
            <person name="Cheng K."/>
            <person name="Dong M."/>
            <person name="Wang F."/>
            <person name="Huang J."/>
            <person name="Sun D."/>
            <person name="Wang L."/>
            <person name="Ye M."/>
            <person name="Zou H."/>
        </authorList>
    </citation>
    <scope>PHOSPHORYLATION [LARGE SCALE ANALYSIS] AT SER-573; SER-615; SER-900; SER-959 AND SER-1277</scope>
    <scope>IDENTIFICATION BY MASS SPECTROMETRY [LARGE SCALE ANALYSIS]</scope>
    <source>
        <tissue>Liver</tissue>
    </source>
</reference>
<reference key="17">
    <citation type="journal article" date="2014" name="Proc. Natl. Acad. Sci. U.S.A.">
        <title>Mapping of SUMO sites and analysis of SUMOylation changes induced by external stimuli.</title>
        <authorList>
            <person name="Impens F."/>
            <person name="Radoshevich L."/>
            <person name="Cossart P."/>
            <person name="Ribet D."/>
        </authorList>
    </citation>
    <scope>SUMOYLATION [LARGE SCALE ANALYSIS] AT LYS-620</scope>
    <scope>IDENTIFICATION BY MASS SPECTROMETRY [LARGE SCALE ANALYSIS]</scope>
</reference>
<reference key="18">
    <citation type="journal article" date="2015" name="Proteomics">
        <title>N-terminome analysis of the human mitochondrial proteome.</title>
        <authorList>
            <person name="Vaca Jacome A.S."/>
            <person name="Rabilloud T."/>
            <person name="Schaeffer-Reiss C."/>
            <person name="Rompais M."/>
            <person name="Ayoub D."/>
            <person name="Lane L."/>
            <person name="Bairoch A."/>
            <person name="Van Dorsselaer A."/>
            <person name="Carapito C."/>
        </authorList>
    </citation>
    <scope>IDENTIFICATION BY MASS SPECTROMETRY [LARGE SCALE ANALYSIS]</scope>
</reference>
<reference key="19">
    <citation type="journal article" date="2017" name="Nat. Struct. Mol. Biol.">
        <title>Site-specific mapping of the human SUMO proteome reveals co-modification with phosphorylation.</title>
        <authorList>
            <person name="Hendriks I.A."/>
            <person name="Lyon D."/>
            <person name="Young C."/>
            <person name="Jensen L.J."/>
            <person name="Vertegaal A.C."/>
            <person name="Nielsen M.L."/>
        </authorList>
    </citation>
    <scope>SUMOYLATION [LARGE SCALE ANALYSIS] AT LYS-148</scope>
    <scope>IDENTIFICATION BY MASS SPECTROMETRY [LARGE SCALE ANALYSIS]</scope>
</reference>
<comment type="function">
    <text evidence="1">Acts as a ribosome receptor and mediates interaction between the ribosome and the endoplasmic reticulum membrane.</text>
</comment>
<comment type="interaction">
    <interactant intactId="EBI-2371806">
        <id>Q9P2E9</id>
    </interactant>
    <interactant intactId="EBI-941975">
        <id>Q01484</id>
        <label>ANK2</label>
    </interactant>
    <organismsDiffer>false</organismsDiffer>
    <experiments>2</experiments>
</comment>
<comment type="subcellular location">
    <subcellularLocation>
        <location evidence="1">Endoplasmic reticulum membrane</location>
        <topology evidence="1">Single-pass type III membrane protein</topology>
    </subcellularLocation>
</comment>
<comment type="alternative products">
    <event type="alternative splicing"/>
    <isoform>
        <id>Q9P2E9-1</id>
        <name>1</name>
        <sequence type="displayed"/>
    </isoform>
    <isoform>
        <id>Q9P2E9-3</id>
        <name>2</name>
        <name>ES130</name>
        <sequence type="described" ref="VSP_003949 VSP_003950"/>
    </isoform>
    <text evidence="5">Additional isoforms seem to exist. Additional isoforms may derive from alternative splicing in the repeat region.</text>
</comment>
<comment type="sequence caution" evidence="7">
    <conflict type="erroneous initiation">
        <sequence resource="EMBL-CDS" id="BAA92636"/>
    </conflict>
    <text>Extended N-terminus.</text>
</comment>
<organism>
    <name type="scientific">Homo sapiens</name>
    <name type="common">Human</name>
    <dbReference type="NCBI Taxonomy" id="9606"/>
    <lineage>
        <taxon>Eukaryota</taxon>
        <taxon>Metazoa</taxon>
        <taxon>Chordata</taxon>
        <taxon>Craniata</taxon>
        <taxon>Vertebrata</taxon>
        <taxon>Euteleostomi</taxon>
        <taxon>Mammalia</taxon>
        <taxon>Eutheria</taxon>
        <taxon>Euarchontoglires</taxon>
        <taxon>Primates</taxon>
        <taxon>Haplorrhini</taxon>
        <taxon>Catarrhini</taxon>
        <taxon>Hominidae</taxon>
        <taxon>Homo</taxon>
    </lineage>
</organism>
<dbReference type="EMBL" id="AF006751">
    <property type="protein sequence ID" value="AAC25977.1"/>
    <property type="molecule type" value="mRNA"/>
</dbReference>
<dbReference type="EMBL" id="AF007575">
    <property type="protein sequence ID" value="AAC25978.1"/>
    <property type="molecule type" value="mRNA"/>
</dbReference>
<dbReference type="EMBL" id="AB037819">
    <property type="protein sequence ID" value="BAA92636.2"/>
    <property type="status" value="ALT_INIT"/>
    <property type="molecule type" value="mRNA"/>
</dbReference>
<dbReference type="EMBL" id="AL132765">
    <property type="status" value="NOT_ANNOTATED_CDS"/>
    <property type="molecule type" value="Genomic_DNA"/>
</dbReference>
<dbReference type="EMBL" id="KF456852">
    <property type="status" value="NOT_ANNOTATED_CDS"/>
    <property type="molecule type" value="Genomic_DNA"/>
</dbReference>
<dbReference type="EMBL" id="AL833822">
    <property type="protein sequence ID" value="CAD38684.1"/>
    <property type="molecule type" value="mRNA"/>
</dbReference>
<dbReference type="EMBL" id="BC000099">
    <property type="protein sequence ID" value="AAH00099.4"/>
    <property type="molecule type" value="mRNA"/>
</dbReference>
<dbReference type="CCDS" id="CCDS13128.1">
    <molecule id="Q9P2E9-3"/>
</dbReference>
<dbReference type="CCDS" id="CCDS93010.1">
    <molecule id="Q9P2E9-1"/>
</dbReference>
<dbReference type="RefSeq" id="NP_001036041.2">
    <molecule id="Q9P2E9-3"/>
    <property type="nucleotide sequence ID" value="NM_001042576.2"/>
</dbReference>
<dbReference type="RefSeq" id="NP_001352542.1">
    <molecule id="Q9P2E9-1"/>
    <property type="nucleotide sequence ID" value="NM_001365613.2"/>
</dbReference>
<dbReference type="RefSeq" id="NP_004578.3">
    <molecule id="Q9P2E9-3"/>
    <property type="nucleotide sequence ID" value="NM_004587.3"/>
</dbReference>
<dbReference type="SMR" id="Q9P2E9"/>
<dbReference type="BioGRID" id="112152">
    <property type="interactions" value="336"/>
</dbReference>
<dbReference type="FunCoup" id="Q9P2E9">
    <property type="interactions" value="1143"/>
</dbReference>
<dbReference type="IntAct" id="Q9P2E9">
    <property type="interactions" value="125"/>
</dbReference>
<dbReference type="MINT" id="Q9P2E9"/>
<dbReference type="DrugBank" id="DB12339">
    <property type="generic name" value="Radezolid"/>
</dbReference>
<dbReference type="GlyGen" id="Q9P2E9">
    <property type="glycosylation" value="5 sites, 1 N-linked glycan (2 sites), 2 O-linked glycans (2 sites)"/>
</dbReference>
<dbReference type="iPTMnet" id="Q9P2E9"/>
<dbReference type="MetOSite" id="Q9P2E9"/>
<dbReference type="PhosphoSitePlus" id="Q9P2E9"/>
<dbReference type="SwissPalm" id="Q9P2E9"/>
<dbReference type="BioMuta" id="RRBP1"/>
<dbReference type="DMDM" id="23822112"/>
<dbReference type="jPOST" id="Q9P2E9"/>
<dbReference type="MassIVE" id="Q9P2E9"/>
<dbReference type="PeptideAtlas" id="Q9P2E9"/>
<dbReference type="ProteomicsDB" id="83798">
    <molecule id="Q9P2E9-1"/>
</dbReference>
<dbReference type="ProteomicsDB" id="83800">
    <molecule id="Q9P2E9-3"/>
</dbReference>
<dbReference type="Pumba" id="Q9P2E9"/>
<dbReference type="Antibodypedia" id="2409">
    <property type="antibodies" value="248 antibodies from 30 providers"/>
</dbReference>
<dbReference type="DNASU" id="6238"/>
<dbReference type="Ensembl" id="ENST00000246043.8">
    <molecule id="Q9P2E9-1"/>
    <property type="protein sequence ID" value="ENSP00000246043.4"/>
    <property type="gene ID" value="ENSG00000125844.17"/>
</dbReference>
<dbReference type="Ensembl" id="ENST00000360807.8">
    <molecule id="Q9P2E9-3"/>
    <property type="protein sequence ID" value="ENSP00000354045.4"/>
    <property type="gene ID" value="ENSG00000125844.17"/>
</dbReference>
<dbReference type="Ensembl" id="ENST00000377807.6">
    <molecule id="Q9P2E9-3"/>
    <property type="protein sequence ID" value="ENSP00000367038.2"/>
    <property type="gene ID" value="ENSG00000125844.17"/>
</dbReference>
<dbReference type="Ensembl" id="ENST00000377813.6">
    <molecule id="Q9P2E9-1"/>
    <property type="protein sequence ID" value="ENSP00000367044.1"/>
    <property type="gene ID" value="ENSG00000125844.17"/>
</dbReference>
<dbReference type="GeneID" id="6238"/>
<dbReference type="KEGG" id="hsa:6238"/>
<dbReference type="MANE-Select" id="ENST00000377813.6">
    <property type="protein sequence ID" value="ENSP00000367044.1"/>
    <property type="RefSeq nucleotide sequence ID" value="NM_001365613.2"/>
    <property type="RefSeq protein sequence ID" value="NP_001352542.1"/>
</dbReference>
<dbReference type="UCSC" id="uc002wpu.4">
    <property type="organism name" value="human"/>
</dbReference>
<dbReference type="UCSC" id="uc002wpv.1">
    <molecule id="Q9P2E9-1"/>
    <property type="organism name" value="human"/>
</dbReference>
<dbReference type="AGR" id="HGNC:10448"/>
<dbReference type="CTD" id="6238"/>
<dbReference type="DisGeNET" id="6238"/>
<dbReference type="GeneCards" id="RRBP1"/>
<dbReference type="HGNC" id="HGNC:10448">
    <property type="gene designation" value="RRBP1"/>
</dbReference>
<dbReference type="HPA" id="ENSG00000125844">
    <property type="expression patterns" value="Tissue enhanced (pancreas)"/>
</dbReference>
<dbReference type="MIM" id="601418">
    <property type="type" value="gene"/>
</dbReference>
<dbReference type="neXtProt" id="NX_Q9P2E9"/>
<dbReference type="OpenTargets" id="ENSG00000125844"/>
<dbReference type="PharmGKB" id="PA34863"/>
<dbReference type="VEuPathDB" id="HostDB:ENSG00000125844"/>
<dbReference type="eggNOG" id="ENOG502QV05">
    <property type="taxonomic scope" value="Eukaryota"/>
</dbReference>
<dbReference type="GeneTree" id="ENSGT00940000158015"/>
<dbReference type="HOGENOM" id="CLU_005662_1_0_1"/>
<dbReference type="InParanoid" id="Q9P2E9"/>
<dbReference type="OMA" id="ATAFEKQ"/>
<dbReference type="OrthoDB" id="6410656at2759"/>
<dbReference type="PAN-GO" id="Q9P2E9">
    <property type="GO annotations" value="1 GO annotation based on evolutionary models"/>
</dbReference>
<dbReference type="PhylomeDB" id="Q9P2E9"/>
<dbReference type="TreeFam" id="TF333579"/>
<dbReference type="PathwayCommons" id="Q9P2E9"/>
<dbReference type="Reactome" id="R-HSA-9725370">
    <property type="pathway name" value="Signaling by ALK fusions and activated point mutants"/>
</dbReference>
<dbReference type="SignaLink" id="Q9P2E9"/>
<dbReference type="BioGRID-ORCS" id="6238">
    <property type="hits" value="15 hits in 1161 CRISPR screens"/>
</dbReference>
<dbReference type="CD-CODE" id="FB4E32DD">
    <property type="entry name" value="Presynaptic clusters and postsynaptic densities"/>
</dbReference>
<dbReference type="ChiTaRS" id="RRBP1">
    <property type="organism name" value="human"/>
</dbReference>
<dbReference type="GeneWiki" id="RRBP1"/>
<dbReference type="GenomeRNAi" id="6238"/>
<dbReference type="Pharos" id="Q9P2E9">
    <property type="development level" value="Tbio"/>
</dbReference>
<dbReference type="PRO" id="PR:Q9P2E9"/>
<dbReference type="Proteomes" id="UP000005640">
    <property type="component" value="Chromosome 20"/>
</dbReference>
<dbReference type="RNAct" id="Q9P2E9">
    <property type="molecule type" value="protein"/>
</dbReference>
<dbReference type="Bgee" id="ENSG00000125844">
    <property type="expression patterns" value="Expressed in body of pancreas and 211 other cell types or tissues"/>
</dbReference>
<dbReference type="ExpressionAtlas" id="Q9P2E9">
    <property type="expression patterns" value="baseline and differential"/>
</dbReference>
<dbReference type="GO" id="GO:0005783">
    <property type="term" value="C:endoplasmic reticulum"/>
    <property type="evidence" value="ECO:0000314"/>
    <property type="project" value="HPA"/>
</dbReference>
<dbReference type="GO" id="GO:0005789">
    <property type="term" value="C:endoplasmic reticulum membrane"/>
    <property type="evidence" value="ECO:0000318"/>
    <property type="project" value="GO_Central"/>
</dbReference>
<dbReference type="GO" id="GO:0016020">
    <property type="term" value="C:membrane"/>
    <property type="evidence" value="ECO:0007005"/>
    <property type="project" value="UniProtKB"/>
</dbReference>
<dbReference type="GO" id="GO:0005840">
    <property type="term" value="C:ribosome"/>
    <property type="evidence" value="ECO:0000304"/>
    <property type="project" value="ProtInc"/>
</dbReference>
<dbReference type="GO" id="GO:0003723">
    <property type="term" value="F:RNA binding"/>
    <property type="evidence" value="ECO:0007005"/>
    <property type="project" value="UniProtKB"/>
</dbReference>
<dbReference type="GO" id="GO:0038023">
    <property type="term" value="F:signaling receptor activity"/>
    <property type="evidence" value="ECO:0000304"/>
    <property type="project" value="ProtInc"/>
</dbReference>
<dbReference type="GO" id="GO:0001649">
    <property type="term" value="P:osteoblast differentiation"/>
    <property type="evidence" value="ECO:0007005"/>
    <property type="project" value="UniProtKB"/>
</dbReference>
<dbReference type="GO" id="GO:0015031">
    <property type="term" value="P:protein transport"/>
    <property type="evidence" value="ECO:0007669"/>
    <property type="project" value="UniProtKB-KW"/>
</dbReference>
<dbReference type="GO" id="GO:0006412">
    <property type="term" value="P:translation"/>
    <property type="evidence" value="ECO:0000304"/>
    <property type="project" value="ProtInc"/>
</dbReference>
<dbReference type="FunFam" id="1.10.287.1490:FF:000010">
    <property type="entry name" value="Ribosome binding protein 1"/>
    <property type="match status" value="1"/>
</dbReference>
<dbReference type="Gene3D" id="1.10.287.1490">
    <property type="match status" value="1"/>
</dbReference>
<dbReference type="InterPro" id="IPR007794">
    <property type="entry name" value="Rib_rcpt_KP"/>
</dbReference>
<dbReference type="InterPro" id="IPR040248">
    <property type="entry name" value="RRBP1"/>
</dbReference>
<dbReference type="PANTHER" id="PTHR18939">
    <property type="entry name" value="RIBOSOME BINDING PROTEIN-1"/>
    <property type="match status" value="1"/>
</dbReference>
<dbReference type="PANTHER" id="PTHR18939:SF4">
    <property type="entry name" value="RIBOSOME-BINDING PROTEIN 1"/>
    <property type="match status" value="1"/>
</dbReference>
<dbReference type="Pfam" id="PF05104">
    <property type="entry name" value="Rib_recp_KP_reg"/>
    <property type="match status" value="2"/>
</dbReference>
<feature type="chain" id="PRO_0000097441" description="Ribosome-binding protein 1">
    <location>
        <begin position="1"/>
        <end position="1410"/>
    </location>
</feature>
<feature type="topological domain" description="Lumenal" evidence="3">
    <location>
        <begin position="1"/>
        <end position="7"/>
    </location>
</feature>
<feature type="transmembrane region" description="Helical" evidence="3">
    <location>
        <begin position="8"/>
        <end position="28"/>
    </location>
</feature>
<feature type="topological domain" description="Cytoplasmic" evidence="3">
    <location>
        <begin position="29"/>
        <end position="1410"/>
    </location>
</feature>
<feature type="repeat" description="1">
    <location>
        <begin position="197"/>
        <end position="206"/>
    </location>
</feature>
<feature type="repeat" description="2">
    <location>
        <begin position="207"/>
        <end position="216"/>
    </location>
</feature>
<feature type="repeat" description="3">
    <location>
        <begin position="217"/>
        <end position="226"/>
    </location>
</feature>
<feature type="repeat" description="4">
    <location>
        <begin position="227"/>
        <end position="236"/>
    </location>
</feature>
<feature type="repeat" description="5">
    <location>
        <begin position="237"/>
        <end position="246"/>
    </location>
</feature>
<feature type="repeat" description="6">
    <location>
        <begin position="247"/>
        <end position="256"/>
    </location>
</feature>
<feature type="repeat" description="7">
    <location>
        <begin position="257"/>
        <end position="266"/>
    </location>
</feature>
<feature type="repeat" description="8">
    <location>
        <begin position="267"/>
        <end position="276"/>
    </location>
</feature>
<feature type="repeat" description="9">
    <location>
        <begin position="277"/>
        <end position="286"/>
    </location>
</feature>
<feature type="repeat" description="10">
    <location>
        <begin position="287"/>
        <end position="296"/>
    </location>
</feature>
<feature type="repeat" description="11">
    <location>
        <begin position="297"/>
        <end position="306"/>
    </location>
</feature>
<feature type="repeat" description="12">
    <location>
        <begin position="307"/>
        <end position="316"/>
    </location>
</feature>
<feature type="repeat" description="13">
    <location>
        <begin position="317"/>
        <end position="326"/>
    </location>
</feature>
<feature type="repeat" description="14">
    <location>
        <begin position="327"/>
        <end position="336"/>
    </location>
</feature>
<feature type="repeat" description="15">
    <location>
        <begin position="337"/>
        <end position="346"/>
    </location>
</feature>
<feature type="repeat" description="16">
    <location>
        <begin position="347"/>
        <end position="356"/>
    </location>
</feature>
<feature type="repeat" description="17">
    <location>
        <begin position="357"/>
        <end position="366"/>
    </location>
</feature>
<feature type="repeat" description="18">
    <location>
        <begin position="367"/>
        <end position="376"/>
    </location>
</feature>
<feature type="repeat" description="19">
    <location>
        <begin position="377"/>
        <end position="386"/>
    </location>
</feature>
<feature type="repeat" description="20">
    <location>
        <begin position="387"/>
        <end position="396"/>
    </location>
</feature>
<feature type="repeat" description="21">
    <location>
        <begin position="397"/>
        <end position="406"/>
    </location>
</feature>
<feature type="repeat" description="22">
    <location>
        <begin position="407"/>
        <end position="416"/>
    </location>
</feature>
<feature type="repeat" description="23">
    <location>
        <begin position="417"/>
        <end position="426"/>
    </location>
</feature>
<feature type="repeat" description="24">
    <location>
        <begin position="427"/>
        <end position="436"/>
    </location>
</feature>
<feature type="repeat" description="25">
    <location>
        <begin position="437"/>
        <end position="446"/>
    </location>
</feature>
<feature type="repeat" description="26">
    <location>
        <begin position="447"/>
        <end position="456"/>
    </location>
</feature>
<feature type="repeat" description="27">
    <location>
        <begin position="457"/>
        <end position="466"/>
    </location>
</feature>
<feature type="repeat" description="28">
    <location>
        <begin position="467"/>
        <end position="476"/>
    </location>
</feature>
<feature type="repeat" description="29">
    <location>
        <begin position="477"/>
        <end position="486"/>
    </location>
</feature>
<feature type="repeat" description="30">
    <location>
        <begin position="487"/>
        <end position="496"/>
    </location>
</feature>
<feature type="repeat" description="31">
    <location>
        <begin position="497"/>
        <end position="506"/>
    </location>
</feature>
<feature type="repeat" description="32">
    <location>
        <begin position="507"/>
        <end position="516"/>
    </location>
</feature>
<feature type="repeat" description="33">
    <location>
        <begin position="517"/>
        <end position="526"/>
    </location>
</feature>
<feature type="repeat" description="34; approximate">
    <location>
        <begin position="527"/>
        <end position="534"/>
    </location>
</feature>
<feature type="repeat" description="35">
    <location>
        <begin position="535"/>
        <end position="544"/>
    </location>
</feature>
<feature type="repeat" description="36; approximate">
    <location>
        <begin position="545"/>
        <end position="554"/>
    </location>
</feature>
<feature type="repeat" description="37">
    <location>
        <begin position="555"/>
        <end position="564"/>
    </location>
</feature>
<feature type="repeat" description="38">
    <location>
        <begin position="565"/>
        <end position="574"/>
    </location>
</feature>
<feature type="repeat" description="39; approximate">
    <location>
        <begin position="575"/>
        <end position="584"/>
    </location>
</feature>
<feature type="repeat" description="40">
    <location>
        <begin position="585"/>
        <end position="594"/>
    </location>
</feature>
<feature type="repeat" description="41">
    <location>
        <begin position="595"/>
        <end position="604"/>
    </location>
</feature>
<feature type="region of interest" description="Disordered" evidence="4">
    <location>
        <begin position="44"/>
        <end position="90"/>
    </location>
</feature>
<feature type="region of interest" description="Disordered" evidence="4">
    <location>
        <begin position="129"/>
        <end position="152"/>
    </location>
</feature>
<feature type="region of interest" description="Disordered" evidence="4">
    <location>
        <begin position="173"/>
        <end position="648"/>
    </location>
</feature>
<feature type="region of interest" description="41 X 10 AA approximate tandem repeats of [TN]-Q-[GSA]-[KRQT]-K-[ATGSV]-[ED]-[GTAS]-[ATIS]-[PQTAS]">
    <location>
        <begin position="197"/>
        <end position="604"/>
    </location>
</feature>
<feature type="region of interest" description="Disordered" evidence="4">
    <location>
        <begin position="895"/>
        <end position="925"/>
    </location>
</feature>
<feature type="region of interest" description="Disordered" evidence="4">
    <location>
        <begin position="1093"/>
        <end position="1122"/>
    </location>
</feature>
<feature type="region of interest" description="Disordered" evidence="4">
    <location>
        <begin position="1260"/>
        <end position="1287"/>
    </location>
</feature>
<feature type="region of interest" description="Disordered" evidence="4">
    <location>
        <begin position="1330"/>
        <end position="1362"/>
    </location>
</feature>
<feature type="region of interest" description="Disordered" evidence="4">
    <location>
        <begin position="1378"/>
        <end position="1410"/>
    </location>
</feature>
<feature type="compositionally biased region" description="Basic residues" evidence="4">
    <location>
        <begin position="52"/>
        <end position="63"/>
    </location>
</feature>
<feature type="compositionally biased region" description="Basic and acidic residues" evidence="4">
    <location>
        <begin position="64"/>
        <end position="88"/>
    </location>
</feature>
<feature type="compositionally biased region" description="Polar residues" evidence="4">
    <location>
        <begin position="191"/>
        <end position="209"/>
    </location>
</feature>
<feature type="compositionally biased region" description="Polar residues" evidence="4">
    <location>
        <begin position="225"/>
        <end position="238"/>
    </location>
</feature>
<feature type="compositionally biased region" description="Polar residues" evidence="4">
    <location>
        <begin position="265"/>
        <end position="278"/>
    </location>
</feature>
<feature type="compositionally biased region" description="Polar residues" evidence="4">
    <location>
        <begin position="295"/>
        <end position="519"/>
    </location>
</feature>
<feature type="compositionally biased region" description="Basic and acidic residues" evidence="4">
    <location>
        <begin position="520"/>
        <end position="532"/>
    </location>
</feature>
<feature type="compositionally biased region" description="Polar residues" evidence="4">
    <location>
        <begin position="553"/>
        <end position="567"/>
    </location>
</feature>
<feature type="compositionally biased region" description="Basic and acidic residues" evidence="4">
    <location>
        <begin position="568"/>
        <end position="581"/>
    </location>
</feature>
<feature type="compositionally biased region" description="Polar residues" evidence="4">
    <location>
        <begin position="602"/>
        <end position="612"/>
    </location>
</feature>
<feature type="compositionally biased region" description="Basic and acidic residues" evidence="4">
    <location>
        <begin position="1347"/>
        <end position="1360"/>
    </location>
</feature>
<feature type="compositionally biased region" description="Basic and acidic residues" evidence="4">
    <location>
        <begin position="1381"/>
        <end position="1403"/>
    </location>
</feature>
<feature type="modified residue" description="Phosphoserine" evidence="2">
    <location>
        <position position="159"/>
    </location>
</feature>
<feature type="modified residue" description="Phosphoserine" evidence="2">
    <location>
        <position position="165"/>
    </location>
</feature>
<feature type="modified residue" description="Phosphothreonine" evidence="9 13">
    <location>
        <position position="225"/>
    </location>
</feature>
<feature type="modified residue" description="Phosphothreonine" evidence="13">
    <location>
        <position position="235"/>
    </location>
</feature>
<feature type="modified residue" description="Phosphothreonine" evidence="9 13">
    <location>
        <position position="245"/>
    </location>
</feature>
<feature type="modified residue" description="Phosphothreonine" evidence="9 13">
    <location>
        <position position="255"/>
    </location>
</feature>
<feature type="modified residue" description="Phosphoserine" evidence="13">
    <location>
        <position position="533"/>
    </location>
</feature>
<feature type="modified residue" description="Phosphoserine" evidence="16">
    <location>
        <position position="573"/>
    </location>
</feature>
<feature type="modified residue" description="Phosphoserine" evidence="9 14">
    <location>
        <position position="583"/>
    </location>
</feature>
<feature type="modified residue" description="Phosphoserine" evidence="8 9 10 11 12 13 14 15 16">
    <location>
        <position position="615"/>
    </location>
</feature>
<feature type="modified residue" description="Phosphoserine" evidence="16">
    <location>
        <position position="900"/>
    </location>
</feature>
<feature type="modified residue" description="N6-acetyllysine" evidence="2">
    <location>
        <position position="932"/>
    </location>
</feature>
<feature type="modified residue" description="Phosphoserine" evidence="15 16">
    <location>
        <position position="959"/>
    </location>
</feature>
<feature type="modified residue" description="Phosphoserine" evidence="14">
    <location>
        <position position="978"/>
    </location>
</feature>
<feature type="modified residue" description="Phosphoserine" evidence="11">
    <location>
        <position position="1276"/>
    </location>
</feature>
<feature type="modified residue" description="Phosphoserine" evidence="11 16">
    <location>
        <position position="1277"/>
    </location>
</feature>
<feature type="cross-link" description="Glycyl lysine isopeptide (Lys-Gly) (interchain with G-Cter in SUMO2)" evidence="18">
    <location>
        <position position="148"/>
    </location>
</feature>
<feature type="cross-link" description="Glycyl lysine isopeptide (Lys-Gly) (interchain with G-Cter in SUMO1)" evidence="17">
    <location>
        <position position="620"/>
    </location>
</feature>
<feature type="splice variant" id="VSP_003949" description="In isoform 2." evidence="6">
    <location>
        <begin position="177"/>
        <end position="606"/>
    </location>
</feature>
<feature type="splice variant" id="VSP_003950" description="In isoform 2." evidence="6">
    <location>
        <begin position="635"/>
        <end position="637"/>
    </location>
</feature>
<feature type="sequence variant" id="VAR_056982" description="In dbSNP:rs1132274.">
    <original>R</original>
    <variation>L</variation>
    <location>
        <position position="1324"/>
    </location>
</feature>
<feature type="sequence conflict" description="In Ref. 1; AAC25978." evidence="7" ref="1">
    <original>K</original>
    <variation>KKTEEAQKQGKKAEGAQIQGKKNEGAQTQGKKAEGAQNQGKKNEGAQTQGKKAEGAQTQGKKADGAQNQGKKAEGAQNQGKKAEGAQNQGKKAEGAQNQGKKADGAQNQGKKAEGAQNQGKKAEGAQNQGT</variation>
    <location>
        <position position="350"/>
    </location>
</feature>
<feature type="sequence conflict" description="In Ref. 2; BAA92636." evidence="7" ref="2">
    <original>Q</original>
    <variation>QNQGKKAEGAQNQGKKAEGAQNQGKKAEGAQNQGKKAEGAQNQDKKAEGAQNQGRKAEGAQNQGRKAEGAQNQGKKAEGAPNQGKKAEGAPNQGKKAEGTPNQGKKAEGTPNQGKKAEGTPNQGKKAEGAQNQGKKAEGAQNQGKKAEGTP</variation>
    <location>
        <position position="406"/>
    </location>
</feature>
<feature type="sequence conflict" description="In Ref. 1; AAC25977, 2; BAA92636, 5; CAD38684 and 6; AAH00099." evidence="7" ref="1 2 5 6">
    <original>L</original>
    <variation>H</variation>
    <location>
        <position position="1043"/>
    </location>
</feature>
<feature type="sequence conflict" description="In Ref. 5; CAD38684." evidence="7" ref="5">
    <original>C</original>
    <variation>R</variation>
    <location>
        <position position="1057"/>
    </location>
</feature>
<feature type="sequence conflict" description="In Ref. 5; CAD38684." evidence="7" ref="5">
    <original>E</original>
    <variation>K</variation>
    <location>
        <position position="1073"/>
    </location>
</feature>
<feature type="sequence conflict" description="In Ref. 2; BAA92636, 5; CAD38684 and 6; AAH00099." evidence="7" ref="2 5 6">
    <original>S</original>
    <variation>L</variation>
    <location>
        <position position="1199"/>
    </location>
</feature>
<feature type="sequence conflict" description="In Ref. 1; AAC25977." evidence="7" ref="1">
    <original>T</original>
    <variation>M</variation>
    <location>
        <position position="1312"/>
    </location>
</feature>
<keyword id="KW-0007">Acetylation</keyword>
<keyword id="KW-0025">Alternative splicing</keyword>
<keyword id="KW-0256">Endoplasmic reticulum</keyword>
<keyword id="KW-1017">Isopeptide bond</keyword>
<keyword id="KW-0472">Membrane</keyword>
<keyword id="KW-0597">Phosphoprotein</keyword>
<keyword id="KW-0653">Protein transport</keyword>
<keyword id="KW-1267">Proteomics identification</keyword>
<keyword id="KW-1185">Reference proteome</keyword>
<keyword id="KW-0677">Repeat</keyword>
<keyword id="KW-0811">Translocation</keyword>
<keyword id="KW-0812">Transmembrane</keyword>
<keyword id="KW-1133">Transmembrane helix</keyword>
<keyword id="KW-0813">Transport</keyword>
<keyword id="KW-0832">Ubl conjugation</keyword>
<protein>
    <recommendedName>
        <fullName>Ribosome-binding protein 1</fullName>
    </recommendedName>
    <alternativeName>
        <fullName>180 kDa ribosome receptor homolog</fullName>
        <shortName>RRp</shortName>
    </alternativeName>
    <alternativeName>
        <fullName>ES/130-related protein</fullName>
    </alternativeName>
    <alternativeName>
        <fullName>Ribosome receptor protein</fullName>
    </alternativeName>
</protein>
<sequence>MDIYDTQTLGVVVFGGFMVVSAIGIFLVSTFSMKETSYEEALANQRKEMAKTHHQKVEKKKKEKTVEKKGKTKKKEEKPNGKIPDHDPAPNVTVLLREPVRAPAVAVAPTPVQPPIIVAPVATVPAMPQEKLASSPKDKKKKEKKVAKVEPAVSSVVNSIQVLTSKAAILETAPKEVPMVVVPPVGAKGNTPATGTTQGKKAEGTQNQSKKAEGAPNQGRKAEGTPNQGKKTEGTPNQGKKAEGTPNQGKKAEGTPNQGKKAEGAQNQGKKVDTTPNQGKKVEGAPTQGRKAEGAQNQAKKVEGAQNQGKKAEGAQNQGKKGEGAQNQGKKAEGAQNQGKKAEGAQNQGKKAEGAQNQGKKAEGAQNQGKKAEGAQNQGKKAEGAQNQGKKVEGAQNQGKKAEGAQNQGKKAEGAQNQGKKAEGAQNQGKKAEGAQNQGKKAEGAQNQGKKAEGAQNQGKKAEGAQNQGKKVEGAQNQGKKAEGAQNQGKKAEGAQNQGKKAEGAQNQGQKGEGAQNQGKKTEGAQGKKAERSPNQGKKGEGAPIQGKKADSVANQGTKVEGITNQGKKAEGSPSEGKKAEGSPNQGKKADAAANQGKKTESASVQGRNTDVAQSPEAPKQEAPAKKKSGSKKKGEPGPPDADGPLYLPYKTLVSTVGSMVFNEGEAQRLIEILSEKAGIIQDTWHKATQKGDPVAILKRQLEEKEKLLATEQEDAAVAKSKLRELNKEMAAEKAKAAAGEAKVKKQLVAREQEITAVQARMQASYREHVKEVQQLQGKIRTLQEQLENGPNTQLARLQQENSILRDALNQATSQVESKQNAELAKLRQELSKVSKELVEKSEAVRQDEQQRKALEAKAAAFEKQVLQLQASHRESEEALQKRLDEVSRELCHTQSSHASLRADAEKAQEQQQQMAELHSKLQSSEAEVRSKCEELSGLHGQLQEARAENSQLTERIRSIEALLEAGQARDAQDVQASQAEADQQQTRLKELESQVSGLEKEAIELREAVEQQKVKNNDLREKNWKAMEALATAEQACKEKLLSLTQAKEESEKQLCLIEAQTMEALLALLPELSVLAQQNYTEWLQDLKEKGPTLLKHPPAPAEPSSDLASKLREAEETQSTLQAECDQYRSILAETEGMLRDLQKSVEEEEQVWRAKVGAAEEELQKSRVTVKHLEEIVEKLKGELESSDQVREHTSHLEAELEKHMAAASAECQNYAKEVAGLRQLLLESQSQLDAAKSEAQKQSDELALVRQQLSEMKSHVEDGDIAGAPASSPEAPPAEQDPVQLKTQLEWTEAILEDEQTQRQKLTAEFEEAQTSACRLQEELEKLRTAGPLESSETEEASQLKERLEKEKKLTSDLGRAATRLQELLKTTQEQLAREKDTVKKLQEQLEKAEDGSSSKEGTSV</sequence>
<proteinExistence type="evidence at protein level"/>
<gene>
    <name type="primary">RRBP1</name>
    <name type="synonym">KIAA1398</name>
</gene>
<accession>Q9P2E9</accession>
<accession>A0A0A0MRV0</accession>
<accession>A2A2S6</accession>
<accession>A6NCN6</accession>
<accession>O75300</accession>
<accession>O75301</accession>
<accession>Q5W165</accession>
<accession>Q96SB2</accession>
<accession>Q9BWP1</accession>
<accession>Q9H476</accession>
<name>RRBP1_HUMAN</name>